<reference key="1">
    <citation type="journal article" date="2000" name="Nature">
        <title>DNA sequence of both chromosomes of the cholera pathogen Vibrio cholerae.</title>
        <authorList>
            <person name="Heidelberg J.F."/>
            <person name="Eisen J.A."/>
            <person name="Nelson W.C."/>
            <person name="Clayton R.A."/>
            <person name="Gwinn M.L."/>
            <person name="Dodson R.J."/>
            <person name="Haft D.H."/>
            <person name="Hickey E.K."/>
            <person name="Peterson J.D."/>
            <person name="Umayam L.A."/>
            <person name="Gill S.R."/>
            <person name="Nelson K.E."/>
            <person name="Read T.D."/>
            <person name="Tettelin H."/>
            <person name="Richardson D.L."/>
            <person name="Ermolaeva M.D."/>
            <person name="Vamathevan J.J."/>
            <person name="Bass S."/>
            <person name="Qin H."/>
            <person name="Dragoi I."/>
            <person name="Sellers P."/>
            <person name="McDonald L.A."/>
            <person name="Utterback T.R."/>
            <person name="Fleischmann R.D."/>
            <person name="Nierman W.C."/>
            <person name="White O."/>
            <person name="Salzberg S.L."/>
            <person name="Smith H.O."/>
            <person name="Colwell R.R."/>
            <person name="Mekalanos J.J."/>
            <person name="Venter J.C."/>
            <person name="Fraser C.M."/>
        </authorList>
    </citation>
    <scope>NUCLEOTIDE SEQUENCE [LARGE SCALE GENOMIC DNA]</scope>
    <source>
        <strain>ATCC 39315 / El Tor Inaba N16961</strain>
    </source>
</reference>
<accession>Q9KPU5</accession>
<name>NUSB_VIBCH</name>
<organism>
    <name type="scientific">Vibrio cholerae serotype O1 (strain ATCC 39315 / El Tor Inaba N16961)</name>
    <dbReference type="NCBI Taxonomy" id="243277"/>
    <lineage>
        <taxon>Bacteria</taxon>
        <taxon>Pseudomonadati</taxon>
        <taxon>Pseudomonadota</taxon>
        <taxon>Gammaproteobacteria</taxon>
        <taxon>Vibrionales</taxon>
        <taxon>Vibrionaceae</taxon>
        <taxon>Vibrio</taxon>
    </lineage>
</organism>
<protein>
    <recommendedName>
        <fullName evidence="1">Transcription antitermination protein NusB</fullName>
    </recommendedName>
    <alternativeName>
        <fullName evidence="1">Antitermination factor NusB</fullName>
    </alternativeName>
</protein>
<comment type="function">
    <text evidence="1">Involved in transcription antitermination. Required for transcription of ribosomal RNA (rRNA) genes. Binds specifically to the boxA antiterminator sequence of the ribosomal RNA (rrn) operons.</text>
</comment>
<comment type="similarity">
    <text evidence="1">Belongs to the NusB family.</text>
</comment>
<evidence type="ECO:0000255" key="1">
    <source>
        <dbReference type="HAMAP-Rule" id="MF_00073"/>
    </source>
</evidence>
<keyword id="KW-1185">Reference proteome</keyword>
<keyword id="KW-0694">RNA-binding</keyword>
<keyword id="KW-0804">Transcription</keyword>
<keyword id="KW-0889">Transcription antitermination</keyword>
<keyword id="KW-0805">Transcription regulation</keyword>
<dbReference type="EMBL" id="AE003852">
    <property type="protein sequence ID" value="AAF95411.1"/>
    <property type="molecule type" value="Genomic_DNA"/>
</dbReference>
<dbReference type="PIR" id="B82098">
    <property type="entry name" value="B82098"/>
</dbReference>
<dbReference type="RefSeq" id="NP_231898.1">
    <property type="nucleotide sequence ID" value="NC_002505.1"/>
</dbReference>
<dbReference type="RefSeq" id="WP_000501296.1">
    <property type="nucleotide sequence ID" value="NZ_LT906614.1"/>
</dbReference>
<dbReference type="SMR" id="Q9KPU5"/>
<dbReference type="STRING" id="243277.VC_2267"/>
<dbReference type="DNASU" id="2613189"/>
<dbReference type="EnsemblBacteria" id="AAF95411">
    <property type="protein sequence ID" value="AAF95411"/>
    <property type="gene ID" value="VC_2267"/>
</dbReference>
<dbReference type="GeneID" id="89513739"/>
<dbReference type="KEGG" id="vch:VC_2267"/>
<dbReference type="PATRIC" id="fig|243277.26.peg.2162"/>
<dbReference type="eggNOG" id="COG0781">
    <property type="taxonomic scope" value="Bacteria"/>
</dbReference>
<dbReference type="HOGENOM" id="CLU_087843_4_1_6"/>
<dbReference type="Proteomes" id="UP000000584">
    <property type="component" value="Chromosome 1"/>
</dbReference>
<dbReference type="GO" id="GO:0005829">
    <property type="term" value="C:cytosol"/>
    <property type="evidence" value="ECO:0000318"/>
    <property type="project" value="GO_Central"/>
</dbReference>
<dbReference type="GO" id="GO:0003723">
    <property type="term" value="F:RNA binding"/>
    <property type="evidence" value="ECO:0007669"/>
    <property type="project" value="UniProtKB-UniRule"/>
</dbReference>
<dbReference type="GO" id="GO:0006353">
    <property type="term" value="P:DNA-templated transcription termination"/>
    <property type="evidence" value="ECO:0007669"/>
    <property type="project" value="UniProtKB-UniRule"/>
</dbReference>
<dbReference type="GO" id="GO:0031564">
    <property type="term" value="P:transcription antitermination"/>
    <property type="evidence" value="ECO:0007669"/>
    <property type="project" value="UniProtKB-KW"/>
</dbReference>
<dbReference type="FunFam" id="1.10.940.10:FF:000001">
    <property type="entry name" value="Transcription antitermination factor NusB"/>
    <property type="match status" value="1"/>
</dbReference>
<dbReference type="Gene3D" id="1.10.940.10">
    <property type="entry name" value="NusB-like"/>
    <property type="match status" value="1"/>
</dbReference>
<dbReference type="HAMAP" id="MF_00073">
    <property type="entry name" value="NusB"/>
    <property type="match status" value="1"/>
</dbReference>
<dbReference type="InterPro" id="IPR035926">
    <property type="entry name" value="NusB-like_sf"/>
</dbReference>
<dbReference type="InterPro" id="IPR011605">
    <property type="entry name" value="NusB_fam"/>
</dbReference>
<dbReference type="InterPro" id="IPR006027">
    <property type="entry name" value="NusB_RsmB_TIM44"/>
</dbReference>
<dbReference type="NCBIfam" id="TIGR01951">
    <property type="entry name" value="nusB"/>
    <property type="match status" value="1"/>
</dbReference>
<dbReference type="PANTHER" id="PTHR11078:SF3">
    <property type="entry name" value="ANTITERMINATION NUSB DOMAIN-CONTAINING PROTEIN"/>
    <property type="match status" value="1"/>
</dbReference>
<dbReference type="PANTHER" id="PTHR11078">
    <property type="entry name" value="N UTILIZATION SUBSTANCE PROTEIN B-RELATED"/>
    <property type="match status" value="1"/>
</dbReference>
<dbReference type="Pfam" id="PF01029">
    <property type="entry name" value="NusB"/>
    <property type="match status" value="1"/>
</dbReference>
<dbReference type="SUPFAM" id="SSF48013">
    <property type="entry name" value="NusB-like"/>
    <property type="match status" value="1"/>
</dbReference>
<gene>
    <name evidence="1" type="primary">nusB</name>
    <name type="ordered locus">VC_2267</name>
</gene>
<sequence>MGASVKPAARRNARQFALQAIYSWQITKENVATIEEQFLTSGKYDEEEHRAAEPALAAPETDVSYFRDLLAGVVLNHNELDSKLRPFVSRPMQDLDMMELALLRLAMYEMTRREDVPYKVVINEAIELAKVFAAEDSHKFVNGVLDKAAPHVRKKA</sequence>
<feature type="chain" id="PRO_0000176602" description="Transcription antitermination protein NusB">
    <location>
        <begin position="1"/>
        <end position="156"/>
    </location>
</feature>
<proteinExistence type="inferred from homology"/>